<sequence>MSNSDKFFNDFKDIVENPKKYIMKHMEQTGQKAIGCMPLYTPEELVLAAGMFPVGVWGSNTELSKAKTYFPAFICSILQTTLENALNGEYDMLSGMMITNYCDSLKCMGQNFKLTVENIEFIPVTVPQNRKMEAGKEFLKSQYKMNIEQLEKISGNKITDESLEKAIEIYDEHRKVMNDFSMLASKYPGIITPTKRNYVMKSAYYMDKKEHTEKVRQLMDEIKAIEPKPFEGKRVITTGIIADSEDLLKILEENNIAIVGDDIAHESRQYRTLTPEANTPMDRLAEQFANRECSTLYDPEKKRGQYIVEMAKERKADGIIFFMTKFCDPEEYDYPQMKKDFEEAGIPHVLIETDMQMKNYEQARTAIQAFSETL</sequence>
<dbReference type="EC" id="4.2.1.175" evidence="1 7"/>
<dbReference type="EMBL" id="AF420489">
    <property type="protein sequence ID" value="AAL18811.1"/>
    <property type="molecule type" value="Genomic_DNA"/>
</dbReference>
<dbReference type="RefSeq" id="WP_003492354.1">
    <property type="nucleotide sequence ID" value="NZ_WTFE01000008.1"/>
</dbReference>
<dbReference type="SMR" id="Q93AL8"/>
<dbReference type="GeneID" id="92940028"/>
<dbReference type="BioCyc" id="MetaCyc:MONOMER-20596"/>
<dbReference type="BRENDA" id="4.2.1.175">
    <property type="organism ID" value="1517"/>
</dbReference>
<dbReference type="UniPathway" id="UPA00139"/>
<dbReference type="GO" id="GO:0051539">
    <property type="term" value="F:4 iron, 4 sulfur cluster binding"/>
    <property type="evidence" value="ECO:0007669"/>
    <property type="project" value="UniProtKB-KW"/>
</dbReference>
<dbReference type="GO" id="GO:0016836">
    <property type="term" value="F:hydro-lyase activity"/>
    <property type="evidence" value="ECO:0000314"/>
    <property type="project" value="UniProtKB"/>
</dbReference>
<dbReference type="GO" id="GO:0046872">
    <property type="term" value="F:metal ion binding"/>
    <property type="evidence" value="ECO:0007669"/>
    <property type="project" value="UniProtKB-KW"/>
</dbReference>
<dbReference type="GO" id="GO:0006559">
    <property type="term" value="P:L-phenylalanine catabolic process"/>
    <property type="evidence" value="ECO:0007669"/>
    <property type="project" value="UniProtKB-UniPathway"/>
</dbReference>
<dbReference type="GO" id="GO:0006558">
    <property type="term" value="P:L-phenylalanine metabolic process"/>
    <property type="evidence" value="ECO:0000314"/>
    <property type="project" value="UniProtKB"/>
</dbReference>
<dbReference type="FunFam" id="3.40.50.11890:FF:000002">
    <property type="entry name" value="(R)-2-hydroxyisocaproyl-CoA dehydratase beta subunit"/>
    <property type="match status" value="1"/>
</dbReference>
<dbReference type="Gene3D" id="1.20.1270.370">
    <property type="match status" value="1"/>
</dbReference>
<dbReference type="Gene3D" id="3.40.50.11890">
    <property type="match status" value="1"/>
</dbReference>
<dbReference type="Gene3D" id="3.40.50.11900">
    <property type="match status" value="1"/>
</dbReference>
<dbReference type="InterPro" id="IPR010327">
    <property type="entry name" value="FldB/FldC_alpha/beta"/>
</dbReference>
<dbReference type="PANTHER" id="PTHR30548">
    <property type="entry name" value="2-HYDROXYGLUTARYL-COA DEHYDRATASE, D-COMPONENT-RELATED"/>
    <property type="match status" value="1"/>
</dbReference>
<dbReference type="PANTHER" id="PTHR30548:SF5">
    <property type="entry name" value="SUBUNIT OF OXYGEN-SENSITIVE 2-HYDROXYISOCAPROYL-COA DEHYDRATASE"/>
    <property type="match status" value="1"/>
</dbReference>
<dbReference type="Pfam" id="PF06050">
    <property type="entry name" value="HGD-D"/>
    <property type="match status" value="1"/>
</dbReference>
<protein>
    <recommendedName>
        <fullName evidence="6 7">(R)-phenyllactyl-CoA dehydratase beta subunit</fullName>
        <ecNumber evidence="1 7">4.2.1.175</ecNumber>
    </recommendedName>
</protein>
<evidence type="ECO:0000269" key="1">
    <source>
    </source>
</evidence>
<evidence type="ECO:0000269" key="2">
    <source>
    </source>
</evidence>
<evidence type="ECO:0000303" key="3">
    <source>
    </source>
</evidence>
<evidence type="ECO:0000303" key="4">
    <source>
    </source>
</evidence>
<evidence type="ECO:0000305" key="5"/>
<evidence type="ECO:0000305" key="6">
    <source>
    </source>
</evidence>
<evidence type="ECO:0000305" key="7">
    <source>
    </source>
</evidence>
<organism>
    <name type="scientific">Clostridium sporogenes</name>
    <dbReference type="NCBI Taxonomy" id="1509"/>
    <lineage>
        <taxon>Bacteria</taxon>
        <taxon>Bacillati</taxon>
        <taxon>Bacillota</taxon>
        <taxon>Clostridia</taxon>
        <taxon>Eubacteriales</taxon>
        <taxon>Clostridiaceae</taxon>
        <taxon>Clostridium</taxon>
    </lineage>
</organism>
<comment type="function">
    <text evidence="1 2">Component of the phenyllactate dehydratase complex FldABC that is involved in the fermentation of L-phenylalanine via a Stickland reaction. This complex catalyzes the reversible syn-dehydration of (R)-phenyllactate to (E)-cinnamate in two steps, a CoA-transfer from cinnamoyl-CoA to phenyllactate, catalyzed by FldA, followed by the dehydration of phenyllactyl-CoA to cinnamoyl-CoA, catalyzed by FldB and FldC. Requires the activator FldI to initiate catalysis.</text>
</comment>
<comment type="catalytic activity">
    <reaction evidence="1 7">
        <text>(R)-3-phenyllactoyl-CoA = (E)-cinnamoyl-CoA + H2O</text>
        <dbReference type="Rhea" id="RHEA:38355"/>
        <dbReference type="ChEBI" id="CHEBI:15377"/>
        <dbReference type="ChEBI" id="CHEBI:57252"/>
        <dbReference type="ChEBI" id="CHEBI:57254"/>
        <dbReference type="EC" id="4.2.1.175"/>
    </reaction>
</comment>
<comment type="catalytic activity">
    <reaction evidence="1 7">
        <text>(R)-3-(4-hydroxyphenyl)lactoyl-CoA = (E)-4-coumaroyl-CoA + H2O</text>
        <dbReference type="Rhea" id="RHEA:60108"/>
        <dbReference type="ChEBI" id="CHEBI:15377"/>
        <dbReference type="ChEBI" id="CHEBI:85008"/>
        <dbReference type="ChEBI" id="CHEBI:143007"/>
        <dbReference type="EC" id="4.2.1.175"/>
    </reaction>
</comment>
<comment type="catalytic activity">
    <reaction evidence="1 7">
        <text>(R)-3-(indol-3-yl)lactoyl-CoA = (E)-3-(indol-3-yl)acryloyl-CoA + H2O</text>
        <dbReference type="Rhea" id="RHEA:60112"/>
        <dbReference type="ChEBI" id="CHEBI:15377"/>
        <dbReference type="ChEBI" id="CHEBI:143008"/>
        <dbReference type="ChEBI" id="CHEBI:143009"/>
        <dbReference type="EC" id="4.2.1.175"/>
    </reaction>
</comment>
<comment type="cofactor">
    <cofactor evidence="1 7">
        <name>[4Fe-4S] cluster</name>
        <dbReference type="ChEBI" id="CHEBI:49883"/>
    </cofactor>
    <text evidence="1">Appears to contain about 1 [4Fe-4S] cluster per heterodimer FldBC.</text>
</comment>
<comment type="cofactor">
    <text evidence="2">No flavin could be detected in the FldABC complex, and the addition of FAD, FMN or riboflavin to the dehydratase do not increase enzymatic activity.</text>
</comment>
<comment type="biophysicochemical properties">
    <kinetics>
        <KM evidence="2">5 uM for (E)-cinnamoyl-CoA (at pH 8 and 20 degrees Celsius)</KM>
        <text evidence="2">kcat is 1 sec(-1) (at pH 8 and 20 degrees Celsius). Values have been measured with the FldABC complex.</text>
    </kinetics>
</comment>
<comment type="pathway">
    <text evidence="6">Amino-acid degradation; L-phenylalanine degradation.</text>
</comment>
<comment type="subunit">
    <text evidence="1 2">Part of the heterotrimeric phenyllactate dehydratase complex FldABC, composed of (R)-phenyllactate CoA-transferase (FldA) and a heterodimeric (R)-phenyllactyl-CoA dehydratase (FldB and FldC).</text>
</comment>
<comment type="mass spectrometry">
    <text>It seems that about 50 C-terminal amino acids have been lost by post-translational modification.</text>
</comment>
<comment type="similarity">
    <text evidence="5">Belongs to the FldB/FldC dehydratase alpha/beta subunit family.</text>
</comment>
<feature type="initiator methionine" description="Removed" evidence="1">
    <location>
        <position position="1"/>
    </location>
</feature>
<feature type="chain" id="PRO_0000423005" description="(R)-phenyllactyl-CoA dehydratase beta subunit">
    <location>
        <begin position="2"/>
        <end position="374"/>
    </location>
</feature>
<gene>
    <name evidence="3 4" type="primary">fldC</name>
</gene>
<keyword id="KW-0004">4Fe-4S</keyword>
<keyword id="KW-0903">Direct protein sequencing</keyword>
<keyword id="KW-0408">Iron</keyword>
<keyword id="KW-0411">Iron-sulfur</keyword>
<keyword id="KW-0456">Lyase</keyword>
<keyword id="KW-0479">Metal-binding</keyword>
<proteinExistence type="evidence at protein level"/>
<name>FLDC_CLOSG</name>
<reference key="1">
    <citation type="journal article" date="2002" name="Mol. Microbiol.">
        <title>Molecular characterization of phenyllactate dehydratase and its initiator from Clostridium sporogenes.</title>
        <authorList>
            <person name="Dickert S."/>
            <person name="Pierik A.J."/>
            <person name="Buckel W."/>
        </authorList>
    </citation>
    <scope>NUCLEOTIDE SEQUENCE [GENOMIC DNA]</scope>
    <scope>FUNCTION</scope>
    <scope>CATALYTIC ACTIVITY</scope>
    <scope>BIOPHYSICOCHEMICAL PROPERTIES</scope>
    <scope>SUBUNIT</scope>
    <scope>COFACTOR</scope>
    <source>
        <strain>ATCC 3584</strain>
    </source>
</reference>
<reference key="2">
    <citation type="journal article" date="2000" name="Eur. J. Biochem.">
        <title>The involvement of coenzyme A esters in the dehydration of (R)-phenyllactate to (E)-cinnamate by Clostridium sporogenes.</title>
        <authorList>
            <person name="Dickert S."/>
            <person name="Pierik A.J."/>
            <person name="Linder D."/>
            <person name="Buckel W."/>
        </authorList>
    </citation>
    <scope>PROTEIN SEQUENCE OF 2-29</scope>
    <scope>FUNCTION</scope>
    <scope>CATALYTIC ACTIVITY</scope>
    <scope>COFACTOR</scope>
    <scope>MASS SPECTROMETRY</scope>
    <scope>SUBUNIT</scope>
    <scope>PATHWAY</scope>
    <source>
        <strain>ATCC 3584</strain>
    </source>
</reference>
<accession>Q93AL8</accession>